<keyword id="KW-1003">Cell membrane</keyword>
<keyword id="KW-1015">Disulfide bond</keyword>
<keyword id="KW-0297">G-protein coupled receptor</keyword>
<keyword id="KW-0325">Glycoprotein</keyword>
<keyword id="KW-0449">Lipoprotein</keyword>
<keyword id="KW-0472">Membrane</keyword>
<keyword id="KW-0564">Palmitate</keyword>
<keyword id="KW-0675">Receptor</keyword>
<keyword id="KW-1185">Reference proteome</keyword>
<keyword id="KW-0807">Transducer</keyword>
<keyword id="KW-0812">Transmembrane</keyword>
<keyword id="KW-1133">Transmembrane helix</keyword>
<evidence type="ECO:0000250" key="1"/>
<evidence type="ECO:0000250" key="2">
    <source>
        <dbReference type="UniProtKB" id="P13945"/>
    </source>
</evidence>
<evidence type="ECO:0000255" key="3"/>
<evidence type="ECO:0000255" key="4">
    <source>
        <dbReference type="PROSITE-ProRule" id="PRU00521"/>
    </source>
</evidence>
<evidence type="ECO:0000256" key="5">
    <source>
        <dbReference type="SAM" id="MobiDB-lite"/>
    </source>
</evidence>
<evidence type="ECO:0000305" key="6"/>
<dbReference type="EMBL" id="X85961">
    <property type="protein sequence ID" value="CAA59937.1"/>
    <property type="molecule type" value="mRNA"/>
</dbReference>
<dbReference type="EMBL" id="AF109930">
    <property type="protein sequence ID" value="AAD26149.1"/>
    <property type="molecule type" value="Genomic_DNA"/>
</dbReference>
<dbReference type="EMBL" id="BC116092">
    <property type="protein sequence ID" value="AAI16093.1"/>
    <property type="molecule type" value="mRNA"/>
</dbReference>
<dbReference type="EMBL" id="X67214">
    <property type="protein sequence ID" value="CAA47654.1"/>
    <property type="molecule type" value="Genomic_DNA"/>
</dbReference>
<dbReference type="PIR" id="S65459">
    <property type="entry name" value="S65459"/>
</dbReference>
<dbReference type="RefSeq" id="NP_776657.1">
    <property type="nucleotide sequence ID" value="NM_174232.2"/>
</dbReference>
<dbReference type="SMR" id="P46626"/>
<dbReference type="FunCoup" id="P46626">
    <property type="interactions" value="23"/>
</dbReference>
<dbReference type="STRING" id="9913.ENSBTAP00000074082"/>
<dbReference type="GlyCosmos" id="P46626">
    <property type="glycosylation" value="2 sites, No reported glycans"/>
</dbReference>
<dbReference type="GlyGen" id="P46626">
    <property type="glycosylation" value="2 sites"/>
</dbReference>
<dbReference type="PaxDb" id="9913-ENSBTAP00000023923"/>
<dbReference type="GeneID" id="281606"/>
<dbReference type="KEGG" id="bta:281606"/>
<dbReference type="CTD" id="155"/>
<dbReference type="eggNOG" id="KOG3656">
    <property type="taxonomic scope" value="Eukaryota"/>
</dbReference>
<dbReference type="HOGENOM" id="CLU_009579_11_0_1"/>
<dbReference type="InParanoid" id="P46626"/>
<dbReference type="OrthoDB" id="5983033at2759"/>
<dbReference type="TreeFam" id="TF316350"/>
<dbReference type="Proteomes" id="UP000009136">
    <property type="component" value="Unplaced"/>
</dbReference>
<dbReference type="GO" id="GO:0005886">
    <property type="term" value="C:plasma membrane"/>
    <property type="evidence" value="ECO:0000318"/>
    <property type="project" value="GO_Central"/>
</dbReference>
<dbReference type="GO" id="GO:0043235">
    <property type="term" value="C:receptor complex"/>
    <property type="evidence" value="ECO:0000250"/>
    <property type="project" value="HGNC-UCL"/>
</dbReference>
<dbReference type="GO" id="GO:0004939">
    <property type="term" value="F:beta-adrenergic receptor activity"/>
    <property type="evidence" value="ECO:0000250"/>
    <property type="project" value="HGNC-UCL"/>
</dbReference>
<dbReference type="GO" id="GO:0015052">
    <property type="term" value="F:beta3-adrenergic receptor activity"/>
    <property type="evidence" value="ECO:0000250"/>
    <property type="project" value="HGNC-UCL"/>
</dbReference>
<dbReference type="GO" id="GO:0051379">
    <property type="term" value="F:epinephrine binding"/>
    <property type="evidence" value="ECO:0000318"/>
    <property type="project" value="GO_Central"/>
</dbReference>
<dbReference type="GO" id="GO:0042803">
    <property type="term" value="F:protein homodimerization activity"/>
    <property type="evidence" value="ECO:0000250"/>
    <property type="project" value="HGNC-UCL"/>
</dbReference>
<dbReference type="GO" id="GO:0071880">
    <property type="term" value="P:adenylate cyclase-activating adrenergic receptor signaling pathway"/>
    <property type="evidence" value="ECO:0000250"/>
    <property type="project" value="HGNC-UCL"/>
</dbReference>
<dbReference type="GO" id="GO:0002025">
    <property type="term" value="P:norepinephrine-epinephrine-mediated vasodilation involved in regulation of systemic arterial blood pressure"/>
    <property type="evidence" value="ECO:0000318"/>
    <property type="project" value="GO_Central"/>
</dbReference>
<dbReference type="GO" id="GO:0043410">
    <property type="term" value="P:positive regulation of MAPK cascade"/>
    <property type="evidence" value="ECO:0000250"/>
    <property type="project" value="HGNC-UCL"/>
</dbReference>
<dbReference type="Gene3D" id="1.20.1070.10">
    <property type="entry name" value="Rhodopsin 7-helix transmembrane proteins"/>
    <property type="match status" value="1"/>
</dbReference>
<dbReference type="InterPro" id="IPR002233">
    <property type="entry name" value="ADR_fam"/>
</dbReference>
<dbReference type="InterPro" id="IPR000681">
    <property type="entry name" value="ADRB3_rcpt"/>
</dbReference>
<dbReference type="InterPro" id="IPR000276">
    <property type="entry name" value="GPCR_Rhodpsn"/>
</dbReference>
<dbReference type="InterPro" id="IPR017452">
    <property type="entry name" value="GPCR_Rhodpsn_7TM"/>
</dbReference>
<dbReference type="PANTHER" id="PTHR24248">
    <property type="entry name" value="ADRENERGIC RECEPTOR-RELATED G-PROTEIN COUPLED RECEPTOR"/>
    <property type="match status" value="1"/>
</dbReference>
<dbReference type="PANTHER" id="PTHR24248:SF3">
    <property type="entry name" value="BETA-3 ADRENERGIC RECEPTOR"/>
    <property type="match status" value="1"/>
</dbReference>
<dbReference type="Pfam" id="PF00001">
    <property type="entry name" value="7tm_1"/>
    <property type="match status" value="1"/>
</dbReference>
<dbReference type="PRINTS" id="PR01103">
    <property type="entry name" value="ADRENERGICR"/>
</dbReference>
<dbReference type="PRINTS" id="PR00563">
    <property type="entry name" value="ADRENRGCB3AR"/>
</dbReference>
<dbReference type="PRINTS" id="PR00237">
    <property type="entry name" value="GPCRRHODOPSN"/>
</dbReference>
<dbReference type="SMART" id="SM01381">
    <property type="entry name" value="7TM_GPCR_Srsx"/>
    <property type="match status" value="1"/>
</dbReference>
<dbReference type="SUPFAM" id="SSF81321">
    <property type="entry name" value="Family A G protein-coupled receptor-like"/>
    <property type="match status" value="1"/>
</dbReference>
<dbReference type="PROSITE" id="PS00237">
    <property type="entry name" value="G_PROTEIN_RECEP_F1_1"/>
    <property type="match status" value="1"/>
</dbReference>
<dbReference type="PROSITE" id="PS50262">
    <property type="entry name" value="G_PROTEIN_RECEP_F1_2"/>
    <property type="match status" value="1"/>
</dbReference>
<organism>
    <name type="scientific">Bos taurus</name>
    <name type="common">Bovine</name>
    <dbReference type="NCBI Taxonomy" id="9913"/>
    <lineage>
        <taxon>Eukaryota</taxon>
        <taxon>Metazoa</taxon>
        <taxon>Chordata</taxon>
        <taxon>Craniata</taxon>
        <taxon>Vertebrata</taxon>
        <taxon>Euteleostomi</taxon>
        <taxon>Mammalia</taxon>
        <taxon>Eutheria</taxon>
        <taxon>Laurasiatheria</taxon>
        <taxon>Artiodactyla</taxon>
        <taxon>Ruminantia</taxon>
        <taxon>Pecora</taxon>
        <taxon>Bovidae</taxon>
        <taxon>Bovinae</taxon>
        <taxon>Bos</taxon>
    </lineage>
</organism>
<reference key="1">
    <citation type="journal article" date="1995" name="Eur. J. Biochem.">
        <title>Molecular cloning and pharmacological characterization of the bovine beta 3-adrenergic receptor.</title>
        <authorList>
            <person name="Pietri-Rouxel F."/>
            <person name="Lenzen G."/>
            <person name="Kapoor A."/>
            <person name="Drumare M.F."/>
            <person name="Archimbault P."/>
            <person name="Strosberg A.D."/>
            <person name="Manning B.S.J."/>
        </authorList>
    </citation>
    <scope>NUCLEOTIDE SEQUENCE [MRNA]</scope>
    <source>
        <tissue>Brown adipose tissue</tissue>
    </source>
</reference>
<reference key="2">
    <citation type="journal article" date="2000" name="J. Anim. Sci.">
        <title>Rapid communication: nucleotide sequences of the bovine, caprine, and ovine beta3-adrenergic receptor genes.</title>
        <authorList>
            <person name="Forrest R.H."/>
            <person name="Hickford J.G.H."/>
        </authorList>
    </citation>
    <scope>NUCLEOTIDE SEQUENCE [GENOMIC DNA]</scope>
    <source>
        <strain>Simmental</strain>
    </source>
</reference>
<reference key="3">
    <citation type="submission" date="2006-05" db="EMBL/GenBank/DDBJ databases">
        <authorList>
            <consortium name="NIH - Mammalian Gene Collection (MGC) project"/>
        </authorList>
    </citation>
    <scope>NUCLEOTIDE SEQUENCE [LARGE SCALE MRNA]</scope>
    <source>
        <strain>Hereford</strain>
        <tissue>Ascending colon</tissue>
    </source>
</reference>
<reference key="4">
    <citation type="submission" date="1993-01" db="EMBL/GenBank/DDBJ databases">
        <title>Bovine beta3-adrenergic receptor, partial genomic sequence.</title>
        <authorList>
            <person name="Stoffel B."/>
            <person name="Meyer H.H.D."/>
        </authorList>
    </citation>
    <scope>NUCLEOTIDE SEQUENCE [GENOMIC DNA] OF 4-106</scope>
    <source>
        <tissue>Muscle</tissue>
    </source>
</reference>
<reference key="5">
    <citation type="journal article" date="1994" name="Biochem. J.">
        <title>Expression of beta 1- and beta 3-adrenergic-receptor messages and adenylate cyclase beta-adrenergic response in bovine perirenal adipose tissue during its transformation from brown into white fat.</title>
        <authorList>
            <person name="Casteilla L."/>
            <person name="Muzzin P."/>
            <person name="Revelli J.-P."/>
            <person name="Ricquier D."/>
            <person name="Giacobino J.-P."/>
        </authorList>
    </citation>
    <scope>NUCLEOTIDE SEQUENCE OF 156-298</scope>
    <source>
        <strain>Friesian</strain>
        <tissue>Adipose tissue</tissue>
    </source>
</reference>
<gene>
    <name type="primary">ADRB3</name>
</gene>
<protein>
    <recommendedName>
        <fullName>Beta-3 adrenergic receptor</fullName>
    </recommendedName>
    <alternativeName>
        <fullName>Beta-3 adrenoreceptor</fullName>
        <shortName>Beta-3 adrenoceptor</shortName>
    </alternativeName>
</protein>
<proteinExistence type="evidence at transcript level"/>
<name>ADRB3_BOVIN</name>
<feature type="chain" id="PRO_0000069138" description="Beta-3 adrenergic receptor">
    <location>
        <begin position="1"/>
        <end position="405"/>
    </location>
</feature>
<feature type="topological domain" description="Extracellular" evidence="1">
    <location>
        <begin position="1"/>
        <end position="36"/>
    </location>
</feature>
<feature type="transmembrane region" description="Helical; Name=1" evidence="1">
    <location>
        <begin position="37"/>
        <end position="63"/>
    </location>
</feature>
<feature type="topological domain" description="Cytoplasmic" evidence="1">
    <location>
        <begin position="64"/>
        <end position="72"/>
    </location>
</feature>
<feature type="transmembrane region" description="Helical; Name=2" evidence="1">
    <location>
        <begin position="73"/>
        <end position="91"/>
    </location>
</feature>
<feature type="topological domain" description="Extracellular" evidence="1">
    <location>
        <begin position="92"/>
        <end position="111"/>
    </location>
</feature>
<feature type="transmembrane region" description="Helical; Name=3" evidence="1">
    <location>
        <begin position="112"/>
        <end position="133"/>
    </location>
</feature>
<feature type="topological domain" description="Cytoplasmic" evidence="1">
    <location>
        <begin position="134"/>
        <end position="155"/>
    </location>
</feature>
<feature type="transmembrane region" description="Helical; Name=4" evidence="1">
    <location>
        <begin position="156"/>
        <end position="178"/>
    </location>
</feature>
<feature type="topological domain" description="Extracellular" evidence="1">
    <location>
        <begin position="179"/>
        <end position="203"/>
    </location>
</feature>
<feature type="transmembrane region" description="Helical; Name=5" evidence="1">
    <location>
        <begin position="204"/>
        <end position="225"/>
    </location>
</feature>
<feature type="topological domain" description="Cytoplasmic" evidence="1">
    <location>
        <begin position="226"/>
        <end position="292"/>
    </location>
</feature>
<feature type="transmembrane region" description="Helical; Name=6" evidence="1">
    <location>
        <begin position="293"/>
        <end position="314"/>
    </location>
</feature>
<feature type="topological domain" description="Extracellular" evidence="1">
    <location>
        <begin position="315"/>
        <end position="326"/>
    </location>
</feature>
<feature type="transmembrane region" description="Helical; Name=7" evidence="1">
    <location>
        <begin position="327"/>
        <end position="347"/>
    </location>
</feature>
<feature type="topological domain" description="Cytoplasmic" evidence="1">
    <location>
        <begin position="348"/>
        <end position="405"/>
    </location>
</feature>
<feature type="region of interest" description="Disordered" evidence="5">
    <location>
        <begin position="247"/>
        <end position="267"/>
    </location>
</feature>
<feature type="region of interest" description="Disordered" evidence="5">
    <location>
        <begin position="371"/>
        <end position="405"/>
    </location>
</feature>
<feature type="compositionally biased region" description="Low complexity" evidence="5">
    <location>
        <begin position="255"/>
        <end position="265"/>
    </location>
</feature>
<feature type="compositionally biased region" description="Low complexity" evidence="5">
    <location>
        <begin position="371"/>
        <end position="384"/>
    </location>
</feature>
<feature type="lipid moiety-binding region" description="S-palmitoyl cysteine" evidence="1">
    <location>
        <position position="361"/>
    </location>
</feature>
<feature type="glycosylation site" description="N-linked (GlcNAc...) asparagine" evidence="3">
    <location>
        <position position="8"/>
    </location>
</feature>
<feature type="glycosylation site" description="N-linked (GlcNAc...) asparagine" evidence="3">
    <location>
        <position position="26"/>
    </location>
</feature>
<feature type="disulfide bond" evidence="4">
    <location>
        <begin position="110"/>
        <end position="196"/>
    </location>
</feature>
<feature type="disulfide bond" evidence="4">
    <location>
        <begin position="189"/>
        <end position="195"/>
    </location>
</feature>
<feature type="sequence conflict" description="In Ref. 4; CAA47654." evidence="6" ref="4">
    <original>PG</original>
    <variation>HE</variation>
    <location>
        <begin position="6"/>
        <end position="7"/>
    </location>
</feature>
<feature type="sequence conflict" description="In Ref. 5." evidence="6" ref="5">
    <original>A</original>
    <variation>T</variation>
    <location>
        <position position="156"/>
    </location>
</feature>
<comment type="function">
    <text>Beta-adrenergic receptors mediate the catecholamine-induced activation of adenylate cyclase through the action of G proteins. Beta-3 is involved in the regulation of lipolysis and thermogenesis.</text>
</comment>
<comment type="subunit">
    <text evidence="2">Interacts with ARRDC3.</text>
</comment>
<comment type="subcellular location">
    <subcellularLocation>
        <location>Cell membrane</location>
        <topology>Multi-pass membrane protein</topology>
    </subcellularLocation>
</comment>
<comment type="similarity">
    <text evidence="4">Belongs to the G-protein coupled receptor 1 family. Adrenergic receptor subfamily. ADRB3 sub-subfamily.</text>
</comment>
<accession>P46626</accession>
<accession>Q1LZC1</accession>
<accession>Q28045</accession>
<accession>Q9TS17</accession>
<sequence>MAPWPPGNSSLTPWPDIPTLAPNTANASGLPGVPWAVALAGALLALAVLATVGGNLLVIVAIARTPRLQTMTNVFVTSLATADLVVGLLVVPPGATLALTGHWPLGVTGCELWTSVDVLCVTASIETLCALAVDRYLAVTNPLRYGALVTKRRALAAVVLVWVVSAAVSFAPIMSKWWRIGADAEAQRCHSNPRCCTFASNMPYALLSSSVSFYLPLLVMLFVYARVFVVATRQLRLLRRELGRFPPEESPPAPSRSGSPGLAGPCASPAGVPSYGRRPARLLPLREHRALRTLGLIMGTFTLCWLPFFVVNVVRALGGPSLVSGPTFLALNWLGYANSAFNPLIYCRSPDFRSAFRRLLCRCRPEEHLAAASPPRAPSGAPTALTSPAGPMQPPELDGASCGLS</sequence>